<keyword id="KW-1017">Isopeptide bond</keyword>
<keyword id="KW-0597">Phosphoprotein</keyword>
<keyword id="KW-1185">Reference proteome</keyword>
<keyword id="KW-0832">Ubl conjugation</keyword>
<comment type="similarity">
    <text evidence="3">Belongs to the UPF0461 family.</text>
</comment>
<proteinExistence type="evidence at transcript level"/>
<feature type="chain" id="PRO_0000295710" description="UPF0461 protein C5orf24 homolog">
    <location>
        <begin position="1"/>
        <end position="155"/>
    </location>
</feature>
<feature type="region of interest" description="Disordered" evidence="2">
    <location>
        <begin position="1"/>
        <end position="20"/>
    </location>
</feature>
<feature type="region of interest" description="Disordered" evidence="2">
    <location>
        <begin position="40"/>
        <end position="155"/>
    </location>
</feature>
<feature type="compositionally biased region" description="Polar residues" evidence="2">
    <location>
        <begin position="1"/>
        <end position="10"/>
    </location>
</feature>
<feature type="compositionally biased region" description="Polar residues" evidence="2">
    <location>
        <begin position="57"/>
        <end position="70"/>
    </location>
</feature>
<feature type="compositionally biased region" description="Basic residues" evidence="2">
    <location>
        <begin position="80"/>
        <end position="92"/>
    </location>
</feature>
<feature type="compositionally biased region" description="Polar residues" evidence="2">
    <location>
        <begin position="94"/>
        <end position="107"/>
    </location>
</feature>
<feature type="modified residue" description="Phosphoserine" evidence="1">
    <location>
        <position position="37"/>
    </location>
</feature>
<feature type="modified residue" description="Phosphoserine" evidence="1">
    <location>
        <position position="121"/>
    </location>
</feature>
<feature type="cross-link" description="Glycyl lysine isopeptide (Lys-Gly) (interchain with G-Cter in SUMO2)" evidence="1">
    <location>
        <position position="75"/>
    </location>
</feature>
<name>CE024_PONAB</name>
<accession>Q5NVP2</accession>
<protein>
    <recommendedName>
        <fullName>UPF0461 protein C5orf24 homolog</fullName>
    </recommendedName>
</protein>
<sequence length="155" mass="16725">MMHPVASSNPAFCGPGKPSCLNEDAMRAADQFDIYSSQQSKYSHTVNHKPMVCQRQDPLNETHLQTTSGRSIEIKDELKKKKNLNRSGKRGRPSGTTKSAGYRTSTGRPLGTTKAAGFKTSPGRPLGTTKAAGYKVSPGRPPGKKQQAFRCSSDA</sequence>
<dbReference type="EMBL" id="CR925972">
    <property type="protein sequence ID" value="CAI29621.1"/>
    <property type="molecule type" value="mRNA"/>
</dbReference>
<dbReference type="RefSeq" id="NP_001127078.1">
    <property type="nucleotide sequence ID" value="NM_001133606.1"/>
</dbReference>
<dbReference type="RefSeq" id="XP_063580015.1">
    <property type="nucleotide sequence ID" value="XM_063723945.1"/>
</dbReference>
<dbReference type="FunCoup" id="Q5NVP2">
    <property type="interactions" value="1611"/>
</dbReference>
<dbReference type="Ensembl" id="ENSPPYT00000018370.3">
    <property type="protein sequence ID" value="ENSPPYP00000017659.2"/>
    <property type="gene ID" value="ENSPPYG00000015793.3"/>
</dbReference>
<dbReference type="GeneID" id="100174108"/>
<dbReference type="KEGG" id="pon:100174108"/>
<dbReference type="CTD" id="119965305"/>
<dbReference type="eggNOG" id="ENOG502RZTV">
    <property type="taxonomic scope" value="Eukaryota"/>
</dbReference>
<dbReference type="GeneTree" id="ENSGT00390000014889"/>
<dbReference type="HOGENOM" id="CLU_090677_0_0_1"/>
<dbReference type="InParanoid" id="Q5NVP2"/>
<dbReference type="OMA" id="TAHFDLC"/>
<dbReference type="OrthoDB" id="10072110at2759"/>
<dbReference type="TreeFam" id="TF333072"/>
<dbReference type="Proteomes" id="UP000001595">
    <property type="component" value="Chromosome 5"/>
</dbReference>
<dbReference type="InterPro" id="IPR040419">
    <property type="entry name" value="DUF5568"/>
</dbReference>
<dbReference type="PANTHER" id="PTHR31894">
    <property type="entry name" value="UPF0461 PROTEIN C5ORF24"/>
    <property type="match status" value="1"/>
</dbReference>
<dbReference type="PANTHER" id="PTHR31894:SF0">
    <property type="entry name" value="UPF0461 PROTEIN C5ORF24"/>
    <property type="match status" value="1"/>
</dbReference>
<dbReference type="Pfam" id="PF17724">
    <property type="entry name" value="DUF5568"/>
    <property type="match status" value="1"/>
</dbReference>
<reference key="1">
    <citation type="submission" date="2004-11" db="EMBL/GenBank/DDBJ databases">
        <authorList>
            <consortium name="The German cDNA consortium"/>
        </authorList>
    </citation>
    <scope>NUCLEOTIDE SEQUENCE [LARGE SCALE MRNA]</scope>
    <source>
        <tissue>Brain cortex</tissue>
    </source>
</reference>
<organism>
    <name type="scientific">Pongo abelii</name>
    <name type="common">Sumatran orangutan</name>
    <name type="synonym">Pongo pygmaeus abelii</name>
    <dbReference type="NCBI Taxonomy" id="9601"/>
    <lineage>
        <taxon>Eukaryota</taxon>
        <taxon>Metazoa</taxon>
        <taxon>Chordata</taxon>
        <taxon>Craniata</taxon>
        <taxon>Vertebrata</taxon>
        <taxon>Euteleostomi</taxon>
        <taxon>Mammalia</taxon>
        <taxon>Eutheria</taxon>
        <taxon>Euarchontoglires</taxon>
        <taxon>Primates</taxon>
        <taxon>Haplorrhini</taxon>
        <taxon>Catarrhini</taxon>
        <taxon>Hominidae</taxon>
        <taxon>Pongo</taxon>
    </lineage>
</organism>
<evidence type="ECO:0000250" key="1">
    <source>
        <dbReference type="UniProtKB" id="Q7Z6I8"/>
    </source>
</evidence>
<evidence type="ECO:0000256" key="2">
    <source>
        <dbReference type="SAM" id="MobiDB-lite"/>
    </source>
</evidence>
<evidence type="ECO:0000305" key="3"/>